<gene>
    <name evidence="1" type="primary">recR</name>
    <name type="ordered locus">HD_0325</name>
</gene>
<feature type="chain" id="PRO_0000190327" description="Recombination protein RecR">
    <location>
        <begin position="1"/>
        <end position="174"/>
    </location>
</feature>
<feature type="domain" description="Toprim" evidence="1">
    <location>
        <begin position="54"/>
        <end position="149"/>
    </location>
</feature>
<feature type="zinc finger region" description="C4-type" evidence="1">
    <location>
        <begin position="30"/>
        <end position="45"/>
    </location>
</feature>
<proteinExistence type="inferred from homology"/>
<reference key="1">
    <citation type="journal article" date="1998" name="Gene">
        <title>The sodA gene of Haemophilus ducreyi encodes a hydrogen peroxide-inhibitable superoxide dismutase.</title>
        <authorList>
            <person name="San Mateo L.R."/>
            <person name="Toffer K.L."/>
            <person name="Kawula T.H."/>
        </authorList>
    </citation>
    <scope>NUCLEOTIDE SEQUENCE [GENOMIC DNA]</scope>
    <source>
        <strain>35000HP / ATCC 700724</strain>
    </source>
</reference>
<reference key="2">
    <citation type="submission" date="2003-06" db="EMBL/GenBank/DDBJ databases">
        <title>The complete genome sequence of Haemophilus ducreyi.</title>
        <authorList>
            <person name="Munson R.S. Jr."/>
            <person name="Ray W.C."/>
            <person name="Mahairas G."/>
            <person name="Sabo P."/>
            <person name="Mungur R."/>
            <person name="Johnson L."/>
            <person name="Nguyen D."/>
            <person name="Wang J."/>
            <person name="Forst C."/>
            <person name="Hood L."/>
        </authorList>
    </citation>
    <scope>NUCLEOTIDE SEQUENCE [LARGE SCALE GENOMIC DNA]</scope>
    <source>
        <strain>35000HP / ATCC 700724</strain>
    </source>
</reference>
<dbReference type="EMBL" id="AF017750">
    <property type="protein sequence ID" value="AAC46216.1"/>
    <property type="molecule type" value="Genomic_DNA"/>
</dbReference>
<dbReference type="EMBL" id="AE017143">
    <property type="protein sequence ID" value="AAP95302.1"/>
    <property type="status" value="ALT_INIT"/>
    <property type="molecule type" value="Genomic_DNA"/>
</dbReference>
<dbReference type="RefSeq" id="WP_010944355.1">
    <property type="nucleotide sequence ID" value="NC_002940.2"/>
</dbReference>
<dbReference type="SMR" id="O30823"/>
<dbReference type="STRING" id="233412.HD_0325"/>
<dbReference type="GeneID" id="60733627"/>
<dbReference type="KEGG" id="hdu:HD_0325"/>
<dbReference type="eggNOG" id="COG0353">
    <property type="taxonomic scope" value="Bacteria"/>
</dbReference>
<dbReference type="HOGENOM" id="CLU_060739_1_2_6"/>
<dbReference type="OrthoDB" id="9802672at2"/>
<dbReference type="Proteomes" id="UP000001022">
    <property type="component" value="Chromosome"/>
</dbReference>
<dbReference type="GO" id="GO:0003677">
    <property type="term" value="F:DNA binding"/>
    <property type="evidence" value="ECO:0007669"/>
    <property type="project" value="UniProtKB-UniRule"/>
</dbReference>
<dbReference type="GO" id="GO:0008270">
    <property type="term" value="F:zinc ion binding"/>
    <property type="evidence" value="ECO:0007669"/>
    <property type="project" value="UniProtKB-KW"/>
</dbReference>
<dbReference type="GO" id="GO:0006310">
    <property type="term" value="P:DNA recombination"/>
    <property type="evidence" value="ECO:0007669"/>
    <property type="project" value="UniProtKB-UniRule"/>
</dbReference>
<dbReference type="GO" id="GO:0006281">
    <property type="term" value="P:DNA repair"/>
    <property type="evidence" value="ECO:0007669"/>
    <property type="project" value="UniProtKB-UniRule"/>
</dbReference>
<dbReference type="CDD" id="cd01025">
    <property type="entry name" value="TOPRIM_recR"/>
    <property type="match status" value="1"/>
</dbReference>
<dbReference type="FunFam" id="3.40.1360.10:FF:000001">
    <property type="entry name" value="Recombination protein RecR"/>
    <property type="match status" value="1"/>
</dbReference>
<dbReference type="Gene3D" id="3.40.1360.10">
    <property type="match status" value="1"/>
</dbReference>
<dbReference type="Gene3D" id="6.10.250.240">
    <property type="match status" value="1"/>
</dbReference>
<dbReference type="HAMAP" id="MF_00017">
    <property type="entry name" value="RecR"/>
    <property type="match status" value="1"/>
</dbReference>
<dbReference type="InterPro" id="IPR000093">
    <property type="entry name" value="DNA_Rcmb_RecR"/>
</dbReference>
<dbReference type="InterPro" id="IPR023627">
    <property type="entry name" value="Rcmb_RecR"/>
</dbReference>
<dbReference type="InterPro" id="IPR015967">
    <property type="entry name" value="Rcmb_RecR_Znf"/>
</dbReference>
<dbReference type="InterPro" id="IPR006171">
    <property type="entry name" value="TOPRIM_dom"/>
</dbReference>
<dbReference type="InterPro" id="IPR034137">
    <property type="entry name" value="TOPRIM_RecR"/>
</dbReference>
<dbReference type="NCBIfam" id="TIGR00615">
    <property type="entry name" value="recR"/>
    <property type="match status" value="1"/>
</dbReference>
<dbReference type="PANTHER" id="PTHR30446">
    <property type="entry name" value="RECOMBINATION PROTEIN RECR"/>
    <property type="match status" value="1"/>
</dbReference>
<dbReference type="PANTHER" id="PTHR30446:SF0">
    <property type="entry name" value="RECOMBINATION PROTEIN RECR"/>
    <property type="match status" value="1"/>
</dbReference>
<dbReference type="Pfam" id="PF21175">
    <property type="entry name" value="RecR_C"/>
    <property type="match status" value="1"/>
</dbReference>
<dbReference type="Pfam" id="PF21176">
    <property type="entry name" value="RecR_HhH"/>
    <property type="match status" value="1"/>
</dbReference>
<dbReference type="Pfam" id="PF02132">
    <property type="entry name" value="RecR_ZnF"/>
    <property type="match status" value="1"/>
</dbReference>
<dbReference type="Pfam" id="PF13662">
    <property type="entry name" value="Toprim_4"/>
    <property type="match status" value="1"/>
</dbReference>
<dbReference type="SMART" id="SM00493">
    <property type="entry name" value="TOPRIM"/>
    <property type="match status" value="1"/>
</dbReference>
<dbReference type="SUPFAM" id="SSF111304">
    <property type="entry name" value="Recombination protein RecR"/>
    <property type="match status" value="1"/>
</dbReference>
<dbReference type="PROSITE" id="PS01300">
    <property type="entry name" value="RECR"/>
    <property type="match status" value="1"/>
</dbReference>
<dbReference type="PROSITE" id="PS50880">
    <property type="entry name" value="TOPRIM"/>
    <property type="match status" value="1"/>
</dbReference>
<organism>
    <name type="scientific">Haemophilus ducreyi (strain 35000HP / ATCC 700724)</name>
    <dbReference type="NCBI Taxonomy" id="233412"/>
    <lineage>
        <taxon>Bacteria</taxon>
        <taxon>Pseudomonadati</taxon>
        <taxon>Pseudomonadota</taxon>
        <taxon>Gammaproteobacteria</taxon>
        <taxon>Pasteurellales</taxon>
        <taxon>Pasteurellaceae</taxon>
        <taxon>Haemophilus</taxon>
    </lineage>
</organism>
<comment type="function">
    <text evidence="1">May play a role in DNA repair. It seems to be involved in an RecBC-independent recombinational process of DNA repair. It may act with RecF and RecO.</text>
</comment>
<comment type="similarity">
    <text evidence="1">Belongs to the RecR family.</text>
</comment>
<comment type="sequence caution" evidence="2">
    <conflict type="erroneous initiation">
        <sequence resource="EMBL-CDS" id="AAP95302"/>
    </conflict>
</comment>
<keyword id="KW-0227">DNA damage</keyword>
<keyword id="KW-0233">DNA recombination</keyword>
<keyword id="KW-0234">DNA repair</keyword>
<keyword id="KW-0479">Metal-binding</keyword>
<keyword id="KW-1185">Reference proteome</keyword>
<keyword id="KW-0862">Zinc</keyword>
<keyword id="KW-0863">Zinc-finger</keyword>
<accession>O30823</accession>
<sequence length="174" mass="19348">MAYHLLQRNRNGGLNLAKALNEAMTHIGHCNACRTFTEEEECTICKNPRRQISGQLCIVEMPEDIQAIEQTGQFSGRYFVLMGHLSPLDGIGPREIGLDLLQQRLEQESFHEIILATNPTIEGDATANYIAEICHLYNVKVTRIAHGIPVGGSLEMVDGTTLSHSFAGRRDFLL</sequence>
<name>RECR_HAEDU</name>
<protein>
    <recommendedName>
        <fullName evidence="1">Recombination protein RecR</fullName>
    </recommendedName>
</protein>
<evidence type="ECO:0000255" key="1">
    <source>
        <dbReference type="HAMAP-Rule" id="MF_00017"/>
    </source>
</evidence>
<evidence type="ECO:0000305" key="2"/>